<name>YPFL_SALTY</name>
<evidence type="ECO:0000305" key="1"/>
<gene>
    <name type="primary">ypfL</name>
    <name type="ordered locus">STM2453</name>
</gene>
<organism>
    <name type="scientific">Salmonella typhimurium (strain LT2 / SGSC1412 / ATCC 700720)</name>
    <dbReference type="NCBI Taxonomy" id="99287"/>
    <lineage>
        <taxon>Bacteria</taxon>
        <taxon>Pseudomonadati</taxon>
        <taxon>Pseudomonadota</taxon>
        <taxon>Gammaproteobacteria</taxon>
        <taxon>Enterobacterales</taxon>
        <taxon>Enterobacteriaceae</taxon>
        <taxon>Salmonella</taxon>
    </lineage>
</organism>
<comment type="sequence caution" evidence="1">
    <conflict type="frameshift">
        <sequence resource="EMBL-CDS" id="AAC78128"/>
    </conflict>
</comment>
<feature type="chain" id="PRO_0000205373" description="Uncharacterized protein YpfL">
    <location>
        <begin position="1"/>
        <end position="425"/>
    </location>
</feature>
<feature type="sequence conflict" description="In Ref. 1; AAC78128." evidence="1" ref="1">
    <original>CL</original>
    <variation>RV</variation>
    <location>
        <begin position="123"/>
        <end position="124"/>
    </location>
</feature>
<feature type="sequence conflict" description="In Ref. 1; AAC78128." evidence="1" ref="1">
    <original>FNRWRQEP</original>
    <variation>LTVAPGT</variation>
    <location>
        <begin position="194"/>
        <end position="201"/>
    </location>
</feature>
<feature type="sequence conflict" description="In Ref. 1; AAC78128." evidence="1" ref="1">
    <original>R</original>
    <variation>V</variation>
    <location>
        <position position="214"/>
    </location>
</feature>
<feature type="sequence conflict" description="In Ref. 1; AAC78128." evidence="1" ref="1">
    <original>R</original>
    <variation>P</variation>
    <location>
        <position position="228"/>
    </location>
</feature>
<feature type="sequence conflict" description="In Ref. 1; AAC78128." evidence="1" ref="1">
    <original>V</original>
    <variation>I</variation>
    <location>
        <position position="250"/>
    </location>
</feature>
<feature type="sequence conflict" description="In Ref. 1." evidence="1" ref="1">
    <original>VAEYG</original>
    <variation>R</variation>
    <location>
        <begin position="254"/>
        <end position="258"/>
    </location>
</feature>
<feature type="sequence conflict" description="In Ref. 1." evidence="1" ref="1">
    <original>LP</original>
    <variation>T</variation>
    <location>
        <begin position="357"/>
        <end position="358"/>
    </location>
</feature>
<feature type="sequence conflict" description="In Ref. 1." evidence="1" ref="1">
    <original>GG</original>
    <variation>RR</variation>
    <location>
        <begin position="365"/>
        <end position="366"/>
    </location>
</feature>
<feature type="sequence conflict" description="In Ref. 1." evidence="1" ref="1">
    <original>VQ</original>
    <variation>FK</variation>
    <location>
        <begin position="371"/>
        <end position="372"/>
    </location>
</feature>
<reference key="1">
    <citation type="journal article" date="1999" name="J. Bacteriol.">
        <title>The 17-gene ethanolamine (eut) operon of Salmonella typhimurium encodes five homologues of carboxysome shell proteins.</title>
        <authorList>
            <person name="Kofoid E.C."/>
            <person name="Rappleye C.A."/>
            <person name="Stojiljkovic I."/>
            <person name="Roth J.R."/>
        </authorList>
    </citation>
    <scope>NUCLEOTIDE SEQUENCE [GENOMIC DNA]</scope>
    <source>
        <strain>LT2</strain>
    </source>
</reference>
<reference key="2">
    <citation type="journal article" date="2001" name="Nature">
        <title>Complete genome sequence of Salmonella enterica serovar Typhimurium LT2.</title>
        <authorList>
            <person name="McClelland M."/>
            <person name="Sanderson K.E."/>
            <person name="Spieth J."/>
            <person name="Clifton S.W."/>
            <person name="Latreille P."/>
            <person name="Courtney L."/>
            <person name="Porwollik S."/>
            <person name="Ali J."/>
            <person name="Dante M."/>
            <person name="Du F."/>
            <person name="Hou S."/>
            <person name="Layman D."/>
            <person name="Leonard S."/>
            <person name="Nguyen C."/>
            <person name="Scott K."/>
            <person name="Holmes A."/>
            <person name="Grewal N."/>
            <person name="Mulvaney E."/>
            <person name="Ryan E."/>
            <person name="Sun H."/>
            <person name="Florea L."/>
            <person name="Miller W."/>
            <person name="Stoneking T."/>
            <person name="Nhan M."/>
            <person name="Waterston R."/>
            <person name="Wilson R.K."/>
        </authorList>
    </citation>
    <scope>NUCLEOTIDE SEQUENCE [LARGE SCALE GENOMIC DNA]</scope>
    <source>
        <strain>LT2 / SGSC1412 / ATCC 700720</strain>
    </source>
</reference>
<keyword id="KW-1185">Reference proteome</keyword>
<protein>
    <recommendedName>
        <fullName>Uncharacterized protein YpfL</fullName>
    </recommendedName>
    <alternativeName>
        <fullName>ORF79</fullName>
    </alternativeName>
</protein>
<proteinExistence type="predicted"/>
<dbReference type="EMBL" id="AF093749">
    <property type="protein sequence ID" value="AAC78128.1"/>
    <property type="status" value="ALT_FRAME"/>
    <property type="molecule type" value="Genomic_DNA"/>
</dbReference>
<dbReference type="EMBL" id="AE006468">
    <property type="protein sequence ID" value="AAL21347.1"/>
    <property type="molecule type" value="Genomic_DNA"/>
</dbReference>
<dbReference type="RefSeq" id="NP_461388.1">
    <property type="nucleotide sequence ID" value="NC_003197.2"/>
</dbReference>
<dbReference type="RefSeq" id="WP_000344439.1">
    <property type="nucleotide sequence ID" value="NC_003197.2"/>
</dbReference>
<dbReference type="STRING" id="99287.STM2453"/>
<dbReference type="PaxDb" id="99287-STM2453"/>
<dbReference type="GeneID" id="1253975"/>
<dbReference type="KEGG" id="stm:STM2453"/>
<dbReference type="PATRIC" id="fig|99287.12.peg.2591"/>
<dbReference type="HOGENOM" id="CLU_054022_0_0_6"/>
<dbReference type="OMA" id="IEICTDC"/>
<dbReference type="BioCyc" id="SENT99287:STM2453-MONOMER"/>
<dbReference type="Proteomes" id="UP000001014">
    <property type="component" value="Chromosome"/>
</dbReference>
<dbReference type="Gene3D" id="2.30.320.10">
    <property type="entry name" value="YwqG-like"/>
    <property type="match status" value="1"/>
</dbReference>
<dbReference type="InterPro" id="IPR015315">
    <property type="entry name" value="DUF1963"/>
</dbReference>
<dbReference type="InterPro" id="IPR035948">
    <property type="entry name" value="YwqG-like_sf"/>
</dbReference>
<dbReference type="Pfam" id="PF09234">
    <property type="entry name" value="DUF1963"/>
    <property type="match status" value="1"/>
</dbReference>
<dbReference type="SUPFAM" id="SSF103032">
    <property type="entry name" value="Hypothetical protein YwqG"/>
    <property type="match status" value="1"/>
</dbReference>
<sequence>MDERIPCKNPQCSHFILPATAARTEGYCMPCVQARYRQVQEEYIRKNRKTIDAFSGITNPVEMLKLVHEPREHDPLIEWIPCPIPTDELYKKLSDDESRDMVDYAEELFDSGWQEEAQEIALCLAAFTQANLDNFLRQVINEEELELSSPLPFHRAPPDVRDALLQKVETDDENRDGILCALAWIGDEVVVEHFNRWRQEPPAWSASLHILPHRYAHQAGWELTENGRRRDLYFTQCTHLVKQAPEQPAVFRAVAEYGENCPHCSLPLINLFEVAPSAVGLSTQGWPGQIRILTCQCCTAYNTVFATVDPQGQPRWYEKNALSTLAVENSADWITLPLDVLHPGESRLPLFAAEIFLPTTFSQLGGHPAWVQDTDYPTCPTCAQTMMFLAQLSYEDIEEEEYAEGMLYGFICPSCQTTATSYQQT</sequence>
<accession>Q9ZFU6</accession>